<sequence>MINLEDYWEDETPGPDREPTNELRNEVEETITLMELLKVSELKDICRSVSFPVSGRKAVLQDLIRNFLQNALVVGKSDPYRVQAVKFLIERIRKNEPLPVYKDLWNALRKGTPLSAITVRSMEGPPTVQQQSPSVIRQSPTQRRKTSTTSSTSRAPPPTNPDASSSSSSFAVPTIHFKESPFYKIQRLIPELVMNVEVTGGRGMCSAKFKLSKADYNLLSNPNSKHRLYLFSGMINPLGSRGNEPIQFPFPNELRCNNVQIKDNIRGFKSKPGTAKPADLTPHLKPYTQQNNVELIYAFTTKEYKLFGYIVEMITPEQLLEKVLQHPKIIKQATLLYLKKTLREDEEMGLTTTSTIMSLQCPISYTRMKYPSKSINCKHLQCFDALWFLHSQLQIPTWQCPVCQIDIALENLAISEFVDDILQNCQKNVEQVELTSDGKWTAILEDDDDSDSDSNDGSRSPEKGTSVSDHHCSSSHPSEPIIINLDSDDDEPNGNNPHVTNNHDDSNRHSNDNNNNSIKNNDSHNKNNNNNNNNNNNNNDNNNSIENNDSNSNNKHDHGSRSNTPSHNHTKNLMNDNDDDDDDRLMAEITSNHLKSTNTDILTEKGSSAPSRTLDPKSYNIVASETTTPVTNRVIPEYLGNSSSYIGKQLPNILGKTPLNVTAVDNSSHLISPDVSVSSPTPRNTASNASSSALSTPPLIRMSSLDPRGSTVPDKTIRPPINSNSYTASISDSFVQPQESSVFPPREQNMDMSFPSTVNSRFNDPRLNTTRFPDSTLRGATILSNNGLDQRNNSLPTTEAITRNDVGRQNSTPVLPTLPQNVPIRTNSNKSGLPLINNENSVPNPPNTATIPLQKSRLIVNPFIPRRPYSNVLPQKRQLSNTSSTSPIMGTWKTQDYGKKYNSG</sequence>
<accession>Q04195</accession>
<accession>D6VT41</accession>
<accession>Q06762</accession>
<accession>Q7LIJ4</accession>
<comment type="function">
    <text evidence="5 6 7 8 9">Acts as an E3 ligase mediating SUMO/Smt3 attachment to septins and PCNA. May be involved in chromosome maintenance.</text>
</comment>
<comment type="pathway">
    <text>Protein modification; protein sumoylation.</text>
</comment>
<comment type="subunit">
    <text evidence="6 8">Interacts with UBC9 and CDC3.</text>
</comment>
<comment type="subcellular location">
    <subcellularLocation>
        <location evidence="13">Cytoplasm</location>
    </subcellularLocation>
    <subcellularLocation>
        <location evidence="6 13">Nucleus</location>
    </subcellularLocation>
    <subcellularLocation>
        <location evidence="6 8 10 13">Bud neck</location>
    </subcellularLocation>
    <text evidence="8">Present at the bud neck in early M-phase.</text>
</comment>
<comment type="domain">
    <text>The SAP domain is required for nuclear targeting.</text>
</comment>
<comment type="domain">
    <text>The SP-RING-type zinc finger mediates interaction with UBC9 and CDC3 and is required for E3 activity.</text>
</comment>
<comment type="PTM">
    <text evidence="6 8">Phosphorylated in early M-phase.</text>
</comment>
<comment type="PTM">
    <text evidence="12">Autosumoylated upon ethanol stress.</text>
</comment>
<comment type="miscellaneous">
    <text evidence="11">Present with 149 molecules/cell in log phase SD medium.</text>
</comment>
<comment type="similarity">
    <text evidence="14">Belongs to the PIAS family.</text>
</comment>
<evidence type="ECO:0000255" key="1">
    <source>
        <dbReference type="PROSITE-ProRule" id="PRU00186"/>
    </source>
</evidence>
<evidence type="ECO:0000255" key="2">
    <source>
        <dbReference type="PROSITE-ProRule" id="PRU00452"/>
    </source>
</evidence>
<evidence type="ECO:0000255" key="3">
    <source>
        <dbReference type="PROSITE-ProRule" id="PRU00799"/>
    </source>
</evidence>
<evidence type="ECO:0000256" key="4">
    <source>
        <dbReference type="SAM" id="MobiDB-lite"/>
    </source>
</evidence>
<evidence type="ECO:0000269" key="5">
    <source>
    </source>
</evidence>
<evidence type="ECO:0000269" key="6">
    <source>
    </source>
</evidence>
<evidence type="ECO:0000269" key="7">
    <source>
    </source>
</evidence>
<evidence type="ECO:0000269" key="8">
    <source>
    </source>
</evidence>
<evidence type="ECO:0000269" key="9">
    <source>
    </source>
</evidence>
<evidence type="ECO:0000269" key="10">
    <source>
    </source>
</evidence>
<evidence type="ECO:0000269" key="11">
    <source>
    </source>
</evidence>
<evidence type="ECO:0000269" key="12">
    <source>
    </source>
</evidence>
<evidence type="ECO:0000269" key="13">
    <source>
    </source>
</evidence>
<evidence type="ECO:0000305" key="14"/>
<evidence type="ECO:0007744" key="15">
    <source>
    </source>
</evidence>
<evidence type="ECO:0007829" key="16">
    <source>
        <dbReference type="PDB" id="2RNN"/>
    </source>
</evidence>
<evidence type="ECO:0007829" key="17">
    <source>
        <dbReference type="PDB" id="3I2D"/>
    </source>
</evidence>
<evidence type="ECO:0007829" key="18">
    <source>
        <dbReference type="PDB" id="5JNE"/>
    </source>
</evidence>
<feature type="chain" id="PRO_0000245783" description="E3 SUMO-protein ligase SIZ1">
    <location>
        <begin position="1"/>
        <end position="904"/>
    </location>
</feature>
<feature type="domain" description="SAP" evidence="1">
    <location>
        <begin position="34"/>
        <end position="68"/>
    </location>
</feature>
<feature type="domain" description="PINIT" evidence="3">
    <location>
        <begin position="162"/>
        <end position="314"/>
    </location>
</feature>
<feature type="zinc finger region" description="SP-RING-type" evidence="2">
    <location>
        <begin position="344"/>
        <end position="431"/>
    </location>
</feature>
<feature type="region of interest" description="Disordered" evidence="4">
    <location>
        <begin position="1"/>
        <end position="21"/>
    </location>
</feature>
<feature type="region of interest" description="Disordered" evidence="4">
    <location>
        <begin position="122"/>
        <end position="170"/>
    </location>
</feature>
<feature type="region of interest" description="Disordered" evidence="4">
    <location>
        <begin position="443"/>
        <end position="584"/>
    </location>
</feature>
<feature type="region of interest" description="Disordered" evidence="4">
    <location>
        <begin position="596"/>
        <end position="616"/>
    </location>
</feature>
<feature type="region of interest" description="Disordered" evidence="4">
    <location>
        <begin position="672"/>
        <end position="733"/>
    </location>
</feature>
<feature type="region of interest" description="Required for localization at the bud neck">
    <location>
        <begin position="794"/>
        <end position="904"/>
    </location>
</feature>
<feature type="region of interest" description="Disordered" evidence="4">
    <location>
        <begin position="877"/>
        <end position="904"/>
    </location>
</feature>
<feature type="compositionally biased region" description="Acidic residues" evidence="4">
    <location>
        <begin position="1"/>
        <end position="13"/>
    </location>
</feature>
<feature type="compositionally biased region" description="Polar residues" evidence="4">
    <location>
        <begin position="127"/>
        <end position="136"/>
    </location>
</feature>
<feature type="compositionally biased region" description="Low complexity" evidence="4">
    <location>
        <begin position="137"/>
        <end position="154"/>
    </location>
</feature>
<feature type="compositionally biased region" description="Acidic residues" evidence="4">
    <location>
        <begin position="444"/>
        <end position="454"/>
    </location>
</feature>
<feature type="compositionally biased region" description="Basic and acidic residues" evidence="4">
    <location>
        <begin position="501"/>
        <end position="511"/>
    </location>
</feature>
<feature type="compositionally biased region" description="Low complexity" evidence="4">
    <location>
        <begin position="512"/>
        <end position="553"/>
    </location>
</feature>
<feature type="compositionally biased region" description="Polar residues" evidence="4">
    <location>
        <begin position="561"/>
        <end position="574"/>
    </location>
</feature>
<feature type="compositionally biased region" description="Polar residues" evidence="4">
    <location>
        <begin position="596"/>
        <end position="611"/>
    </location>
</feature>
<feature type="compositionally biased region" description="Polar residues" evidence="4">
    <location>
        <begin position="672"/>
        <end position="683"/>
    </location>
</feature>
<feature type="compositionally biased region" description="Low complexity" evidence="4">
    <location>
        <begin position="684"/>
        <end position="699"/>
    </location>
</feature>
<feature type="compositionally biased region" description="Polar residues" evidence="4">
    <location>
        <begin position="721"/>
        <end position="733"/>
    </location>
</feature>
<feature type="compositionally biased region" description="Polar residues" evidence="4">
    <location>
        <begin position="877"/>
        <end position="894"/>
    </location>
</feature>
<feature type="binding site" evidence="2">
    <location>
        <position position="377"/>
    </location>
    <ligand>
        <name>Zn(2+)</name>
        <dbReference type="ChEBI" id="CHEBI:29105"/>
    </ligand>
</feature>
<feature type="binding site" evidence="2">
    <location>
        <position position="379"/>
    </location>
    <ligand>
        <name>Zn(2+)</name>
        <dbReference type="ChEBI" id="CHEBI:29105"/>
    </ligand>
</feature>
<feature type="binding site" evidence="2">
    <location>
        <position position="400"/>
    </location>
    <ligand>
        <name>Zn(2+)</name>
        <dbReference type="ChEBI" id="CHEBI:29105"/>
    </ligand>
</feature>
<feature type="binding site" evidence="2">
    <location>
        <position position="403"/>
    </location>
    <ligand>
        <name>Zn(2+)</name>
        <dbReference type="ChEBI" id="CHEBI:29105"/>
    </ligand>
</feature>
<feature type="modified residue" description="Phosphoserine" evidence="15">
    <location>
        <position position="132"/>
    </location>
</feature>
<feature type="modified residue" description="Phosphoserine" evidence="15">
    <location>
        <position position="794"/>
    </location>
</feature>
<feature type="mutagenesis site" description="Reduces E3 activity." evidence="7">
    <original>C</original>
    <variation>S</variation>
    <location>
        <position position="361"/>
    </location>
</feature>
<feature type="mutagenesis site" description="Strongly reduces E3 activity, but no effect on subcellular location." evidence="7 8 10">
    <original>C</original>
    <variation>S</variation>
    <location>
        <position position="377"/>
    </location>
</feature>
<feature type="mutagenesis site" description="Reduces E3 activity." evidence="7">
    <original>C</original>
    <variation>S</variation>
    <location>
        <position position="400"/>
    </location>
</feature>
<feature type="mutagenesis site" description="No effect on E3 activity." evidence="7">
    <original>S</original>
    <variation>C</variation>
    <location>
        <position position="460"/>
    </location>
</feature>
<feature type="helix" evidence="16">
    <location>
        <begin position="4"/>
        <end position="6"/>
    </location>
</feature>
<feature type="strand" evidence="16">
    <location>
        <begin position="16"/>
        <end position="18"/>
    </location>
</feature>
<feature type="helix" evidence="16">
    <location>
        <begin position="21"/>
        <end position="34"/>
    </location>
</feature>
<feature type="helix" evidence="16">
    <location>
        <begin position="39"/>
        <end position="48"/>
    </location>
</feature>
<feature type="helix" evidence="16">
    <location>
        <begin position="57"/>
        <end position="70"/>
    </location>
</feature>
<feature type="helix" evidence="16">
    <location>
        <begin position="79"/>
        <end position="94"/>
    </location>
</feature>
<feature type="helix" evidence="16">
    <location>
        <begin position="101"/>
        <end position="110"/>
    </location>
</feature>
<feature type="strand" evidence="17">
    <location>
        <begin position="169"/>
        <end position="172"/>
    </location>
</feature>
<feature type="strand" evidence="17">
    <location>
        <begin position="183"/>
        <end position="196"/>
    </location>
</feature>
<feature type="strand" evidence="17">
    <location>
        <begin position="199"/>
        <end position="209"/>
    </location>
</feature>
<feature type="helix" evidence="17">
    <location>
        <begin position="213"/>
        <end position="220"/>
    </location>
</feature>
<feature type="strand" evidence="17">
    <location>
        <begin position="226"/>
        <end position="236"/>
    </location>
</feature>
<feature type="helix" evidence="17">
    <location>
        <begin position="241"/>
        <end position="243"/>
    </location>
</feature>
<feature type="strand" evidence="17">
    <location>
        <begin position="250"/>
        <end position="256"/>
    </location>
</feature>
<feature type="strand" evidence="18">
    <location>
        <begin position="269"/>
        <end position="271"/>
    </location>
</feature>
<feature type="helix" evidence="17">
    <location>
        <begin position="273"/>
        <end position="275"/>
    </location>
</feature>
<feature type="helix" evidence="17">
    <location>
        <begin position="281"/>
        <end position="283"/>
    </location>
</feature>
<feature type="strand" evidence="17">
    <location>
        <begin position="287"/>
        <end position="289"/>
    </location>
</feature>
<feature type="strand" evidence="17">
    <location>
        <begin position="291"/>
        <end position="302"/>
    </location>
</feature>
<feature type="strand" evidence="17">
    <location>
        <begin position="304"/>
        <end position="313"/>
    </location>
</feature>
<feature type="helix" evidence="17">
    <location>
        <begin position="316"/>
        <end position="324"/>
    </location>
</feature>
<feature type="helix" evidence="17">
    <location>
        <begin position="331"/>
        <end position="343"/>
    </location>
</feature>
<feature type="strand" evidence="17">
    <location>
        <begin position="354"/>
        <end position="360"/>
    </location>
</feature>
<feature type="turn" evidence="17">
    <location>
        <begin position="362"/>
        <end position="364"/>
    </location>
</feature>
<feature type="strand" evidence="17">
    <location>
        <begin position="365"/>
        <end position="367"/>
    </location>
</feature>
<feature type="strand" evidence="17">
    <location>
        <begin position="369"/>
        <end position="374"/>
    </location>
</feature>
<feature type="helix" evidence="17">
    <location>
        <begin position="385"/>
        <end position="394"/>
    </location>
</feature>
<feature type="turn" evidence="17">
    <location>
        <begin position="401"/>
        <end position="403"/>
    </location>
</feature>
<feature type="helix" evidence="17">
    <location>
        <begin position="409"/>
        <end position="411"/>
    </location>
</feature>
<feature type="strand" evidence="17">
    <location>
        <begin position="412"/>
        <end position="415"/>
    </location>
</feature>
<feature type="helix" evidence="17">
    <location>
        <begin position="416"/>
        <end position="422"/>
    </location>
</feature>
<feature type="strand" evidence="17">
    <location>
        <begin position="431"/>
        <end position="435"/>
    </location>
</feature>
<feature type="strand" evidence="17">
    <location>
        <begin position="440"/>
        <end position="442"/>
    </location>
</feature>
<protein>
    <recommendedName>
        <fullName>E3 SUMO-protein ligase SIZ1</fullName>
        <ecNumber>2.3.2.-</ecNumber>
    </recommendedName>
    <alternativeName>
        <fullName evidence="14">E3 SUMO-protein transferase SIZ2</fullName>
    </alternativeName>
    <alternativeName>
        <fullName>SAP and Miz-finger domain-containing protein 1</fullName>
    </alternativeName>
    <alternativeName>
        <fullName>Ubiquitin-like protein ligase 1</fullName>
    </alternativeName>
</protein>
<reference key="1">
    <citation type="journal article" date="1997" name="Nature">
        <title>The nucleotide sequence of Saccharomyces cerevisiae chromosome IV.</title>
        <authorList>
            <person name="Jacq C."/>
            <person name="Alt-Moerbe J."/>
            <person name="Andre B."/>
            <person name="Arnold W."/>
            <person name="Bahr A."/>
            <person name="Ballesta J.P.G."/>
            <person name="Bargues M."/>
            <person name="Baron L."/>
            <person name="Becker A."/>
            <person name="Biteau N."/>
            <person name="Bloecker H."/>
            <person name="Blugeon C."/>
            <person name="Boskovic J."/>
            <person name="Brandt P."/>
            <person name="Brueckner M."/>
            <person name="Buitrago M.J."/>
            <person name="Coster F."/>
            <person name="Delaveau T."/>
            <person name="del Rey F."/>
            <person name="Dujon B."/>
            <person name="Eide L.G."/>
            <person name="Garcia-Cantalejo J.M."/>
            <person name="Goffeau A."/>
            <person name="Gomez-Peris A."/>
            <person name="Granotier C."/>
            <person name="Hanemann V."/>
            <person name="Hankeln T."/>
            <person name="Hoheisel J.D."/>
            <person name="Jaeger W."/>
            <person name="Jimenez A."/>
            <person name="Jonniaux J.-L."/>
            <person name="Kraemer C."/>
            <person name="Kuester H."/>
            <person name="Laamanen P."/>
            <person name="Legros Y."/>
            <person name="Louis E.J."/>
            <person name="Moeller-Rieker S."/>
            <person name="Monnet A."/>
            <person name="Moro M."/>
            <person name="Mueller-Auer S."/>
            <person name="Nussbaumer B."/>
            <person name="Paricio N."/>
            <person name="Paulin L."/>
            <person name="Perea J."/>
            <person name="Perez-Alonso M."/>
            <person name="Perez-Ortin J.E."/>
            <person name="Pohl T.M."/>
            <person name="Prydz H."/>
            <person name="Purnelle B."/>
            <person name="Rasmussen S.W."/>
            <person name="Remacha M.A."/>
            <person name="Revuelta J.L."/>
            <person name="Rieger M."/>
            <person name="Salom D."/>
            <person name="Saluz H.P."/>
            <person name="Saiz J.E."/>
            <person name="Saren A.-M."/>
            <person name="Schaefer M."/>
            <person name="Scharfe M."/>
            <person name="Schmidt E.R."/>
            <person name="Schneider C."/>
            <person name="Scholler P."/>
            <person name="Schwarz S."/>
            <person name="Soler-Mira A."/>
            <person name="Urrestarazu L.A."/>
            <person name="Verhasselt P."/>
            <person name="Vissers S."/>
            <person name="Voet M."/>
            <person name="Volckaert G."/>
            <person name="Wagner G."/>
            <person name="Wambutt R."/>
            <person name="Wedler E."/>
            <person name="Wedler H."/>
            <person name="Woelfl S."/>
            <person name="Harris D.E."/>
            <person name="Bowman S."/>
            <person name="Brown D."/>
            <person name="Churcher C.M."/>
            <person name="Connor R."/>
            <person name="Dedman K."/>
            <person name="Gentles S."/>
            <person name="Hamlin N."/>
            <person name="Hunt S."/>
            <person name="Jones L."/>
            <person name="McDonald S."/>
            <person name="Murphy L.D."/>
            <person name="Niblett D."/>
            <person name="Odell C."/>
            <person name="Oliver K."/>
            <person name="Rajandream M.A."/>
            <person name="Richards C."/>
            <person name="Shore L."/>
            <person name="Walsh S.V."/>
            <person name="Barrell B.G."/>
            <person name="Dietrich F.S."/>
            <person name="Mulligan J.T."/>
            <person name="Allen E."/>
            <person name="Araujo R."/>
            <person name="Aviles E."/>
            <person name="Berno A."/>
            <person name="Carpenter J."/>
            <person name="Chen E."/>
            <person name="Cherry J.M."/>
            <person name="Chung E."/>
            <person name="Duncan M."/>
            <person name="Hunicke-Smith S."/>
            <person name="Hyman R.W."/>
            <person name="Komp C."/>
            <person name="Lashkari D."/>
            <person name="Lew H."/>
            <person name="Lin D."/>
            <person name="Mosedale D."/>
            <person name="Nakahara K."/>
            <person name="Namath A."/>
            <person name="Oefner P."/>
            <person name="Oh C."/>
            <person name="Petel F.X."/>
            <person name="Roberts D."/>
            <person name="Schramm S."/>
            <person name="Schroeder M."/>
            <person name="Shogren T."/>
            <person name="Shroff N."/>
            <person name="Winant A."/>
            <person name="Yelton M.A."/>
            <person name="Botstein D."/>
            <person name="Davis R.W."/>
            <person name="Johnston M."/>
            <person name="Andrews S."/>
            <person name="Brinkman R."/>
            <person name="Cooper J."/>
            <person name="Ding H."/>
            <person name="Du Z."/>
            <person name="Favello A."/>
            <person name="Fulton L."/>
            <person name="Gattung S."/>
            <person name="Greco T."/>
            <person name="Hallsworth K."/>
            <person name="Hawkins J."/>
            <person name="Hillier L.W."/>
            <person name="Jier M."/>
            <person name="Johnson D."/>
            <person name="Johnston L."/>
            <person name="Kirsten J."/>
            <person name="Kucaba T."/>
            <person name="Langston Y."/>
            <person name="Latreille P."/>
            <person name="Le T."/>
            <person name="Mardis E."/>
            <person name="Menezes S."/>
            <person name="Miller N."/>
            <person name="Nhan M."/>
            <person name="Pauley A."/>
            <person name="Peluso D."/>
            <person name="Rifkin L."/>
            <person name="Riles L."/>
            <person name="Taich A."/>
            <person name="Trevaskis E."/>
            <person name="Vignati D."/>
            <person name="Wilcox L."/>
            <person name="Wohldman P."/>
            <person name="Vaudin M."/>
            <person name="Wilson R."/>
            <person name="Waterston R."/>
            <person name="Albermann K."/>
            <person name="Hani J."/>
            <person name="Heumann K."/>
            <person name="Kleine K."/>
            <person name="Mewes H.-W."/>
            <person name="Zollner A."/>
            <person name="Zaccaria P."/>
        </authorList>
    </citation>
    <scope>NUCLEOTIDE SEQUENCE [LARGE SCALE GENOMIC DNA]</scope>
    <source>
        <strain>ATCC 204508 / S288c</strain>
    </source>
</reference>
<reference key="2">
    <citation type="journal article" date="2014" name="G3 (Bethesda)">
        <title>The reference genome sequence of Saccharomyces cerevisiae: Then and now.</title>
        <authorList>
            <person name="Engel S.R."/>
            <person name="Dietrich F.S."/>
            <person name="Fisk D.G."/>
            <person name="Binkley G."/>
            <person name="Balakrishnan R."/>
            <person name="Costanzo M.C."/>
            <person name="Dwight S.S."/>
            <person name="Hitz B.C."/>
            <person name="Karra K."/>
            <person name="Nash R.S."/>
            <person name="Weng S."/>
            <person name="Wong E.D."/>
            <person name="Lloyd P."/>
            <person name="Skrzypek M.S."/>
            <person name="Miyasato S.R."/>
            <person name="Simison M."/>
            <person name="Cherry J.M."/>
        </authorList>
    </citation>
    <scope>GENOME REANNOTATION</scope>
    <source>
        <strain>ATCC 204508 / S288c</strain>
    </source>
</reference>
<reference key="3">
    <citation type="journal article" date="1993" name="Yeast">
        <title>Isolation and DNA sequence of the STE14 gene encoding farnesyl cysteine: carboxyl methyltransferase.</title>
        <authorList>
            <person name="Ashby M.N."/>
            <person name="Errada P.R."/>
            <person name="Boyartchuk V.L."/>
            <person name="Rine J."/>
        </authorList>
    </citation>
    <scope>NUCLEOTIDE SEQUENCE [GENOMIC DNA] OF 709-904</scope>
    <source>
        <strain>JRY3205</strain>
    </source>
</reference>
<reference key="4">
    <citation type="journal article" date="2001" name="Cell">
        <title>An E3-like factor that promotes SUMO conjugation to the yeast septins.</title>
        <authorList>
            <person name="Johnson E.S."/>
            <person name="Gupta A.A."/>
        </authorList>
    </citation>
    <scope>FUNCTION</scope>
    <scope>INTERACTION WITH UBC9</scope>
    <scope>SUBCELLULAR LOCATION</scope>
    <scope>PHOSPHORYLATION</scope>
</reference>
<reference key="5">
    <citation type="journal article" date="2001" name="Gene">
        <title>A novel factor required for the SUMO1/Smt3 conjugation of yeast septins.</title>
        <authorList>
            <person name="Takahashi Y."/>
            <person name="Toh-e A."/>
            <person name="Kikuchi Y."/>
        </authorList>
    </citation>
    <scope>FUNCTION</scope>
    <scope>INTERACTION WITH UBC9 AND CDC3</scope>
    <scope>SUBCELLULAR LOCATION</scope>
    <scope>MUTAGENESIS OF CYS-377</scope>
    <scope>PHOSPHORYLATION</scope>
</reference>
<reference key="6">
    <citation type="journal article" date="2001" name="Genetics">
        <title>Saccharomyces cerevisiae SMT4 encodes an evolutionarily conserved protease with a role in chromosome condensation regulation.</title>
        <authorList>
            <person name="Strunnikov A.V."/>
            <person name="Aravind L."/>
            <person name="Koonin E.V."/>
        </authorList>
    </citation>
    <scope>FUNCTION</scope>
</reference>
<reference key="7">
    <citation type="journal article" date="2001" name="J. Biol. Chem.">
        <title>Yeast Ull1/Siz1 is a novel SUMO1/Smt3 ligase for septin components and functions as an adaptor between conjugating enzyme and substrates.</title>
        <authorList>
            <person name="Takahashi Y."/>
            <person name="Kahyo T."/>
            <person name="Toh-e A."/>
            <person name="Yasuda H."/>
            <person name="Kikuchi Y."/>
        </authorList>
    </citation>
    <scope>FUNCTION</scope>
    <scope>MUTAGENESIS OF CYS-361; CYS-377; CYS-400 AND SER-460</scope>
</reference>
<reference key="8">
    <citation type="journal article" date="2002" name="Nature">
        <title>RAD6-dependent DNA repair is linked to modification of PCNA by ubiquitin and SUMO.</title>
        <authorList>
            <person name="Hoege C."/>
            <person name="Pfander B."/>
            <person name="Moldovan G.-L."/>
            <person name="Pyrowolakis G."/>
            <person name="Jentsch S."/>
        </authorList>
    </citation>
    <scope>FUNCTION</scope>
</reference>
<reference key="9">
    <citation type="journal article" date="2003" name="J. Biochem.">
        <title>Comparative analysis of yeast PIAS-type SUMO ligases in vivo and in vitro.</title>
        <authorList>
            <person name="Takahashi Y."/>
            <person name="Toh-e A."/>
            <person name="Kikuchi Y."/>
        </authorList>
    </citation>
    <scope>SUBCELLULAR LOCATION</scope>
    <scope>MUTAGENESIS OF CYS-377</scope>
</reference>
<reference key="10">
    <citation type="journal article" date="2003" name="Nature">
        <title>Global analysis of protein localization in budding yeast.</title>
        <authorList>
            <person name="Huh W.-K."/>
            <person name="Falvo J.V."/>
            <person name="Gerke L.C."/>
            <person name="Carroll A.S."/>
            <person name="Howson R.W."/>
            <person name="Weissman J.S."/>
            <person name="O'Shea E.K."/>
        </authorList>
    </citation>
    <scope>SUBCELLULAR LOCATION [LARGE SCALE ANALYSIS]</scope>
</reference>
<reference key="11">
    <citation type="journal article" date="2003" name="Nature">
        <title>Global analysis of protein expression in yeast.</title>
        <authorList>
            <person name="Ghaemmaghami S."/>
            <person name="Huh W.-K."/>
            <person name="Bower K."/>
            <person name="Howson R.W."/>
            <person name="Belle A."/>
            <person name="Dephoure N."/>
            <person name="O'Shea E.K."/>
            <person name="Weissman J.S."/>
        </authorList>
    </citation>
    <scope>LEVEL OF PROTEIN EXPRESSION [LARGE SCALE ANALYSIS]</scope>
</reference>
<reference key="12">
    <citation type="journal article" date="2004" name="J. Biol. Chem.">
        <title>Global analyses of sumoylated proteins in Saccharomyces cerevisiae. Induction of protein sumoylation by cellular stresses.</title>
        <authorList>
            <person name="Zhou W."/>
            <person name="Ryan J.J."/>
            <person name="Zhou H."/>
        </authorList>
    </citation>
    <scope>SUMOYLATION [LARGE SCALE ANALYSIS]</scope>
    <scope>IDENTIFICATION BY MASS SPECTROMETRY</scope>
</reference>
<reference key="13">
    <citation type="journal article" date="2005" name="J. Biol. Chem.">
        <title>Yeast PIAS-type Ull1/Siz1 is composed of SUMO ligase and regulatory domains.</title>
        <authorList>
            <person name="Takahashi Y."/>
            <person name="Kikuchi Y."/>
        </authorList>
    </citation>
    <scope>SUBCELLULAR LOCATION</scope>
</reference>
<reference key="14">
    <citation type="journal article" date="2008" name="Mol. Cell. Proteomics">
        <title>A multidimensional chromatography technology for in-depth phosphoproteome analysis.</title>
        <authorList>
            <person name="Albuquerque C.P."/>
            <person name="Smolka M.B."/>
            <person name="Payne S.H."/>
            <person name="Bafna V."/>
            <person name="Eng J."/>
            <person name="Zhou H."/>
        </authorList>
    </citation>
    <scope>PHOSPHORYLATION [LARGE SCALE ANALYSIS] AT SER-132 AND SER-794</scope>
    <scope>IDENTIFICATION BY MASS SPECTROMETRY [LARGE SCALE ANALYSIS]</scope>
</reference>
<reference key="15">
    <citation type="journal article" date="2009" name="Science">
        <title>Global analysis of Cdk1 substrate phosphorylation sites provides insights into evolution.</title>
        <authorList>
            <person name="Holt L.J."/>
            <person name="Tuch B.B."/>
            <person name="Villen J."/>
            <person name="Johnson A.D."/>
            <person name="Gygi S.P."/>
            <person name="Morgan D.O."/>
        </authorList>
    </citation>
    <scope>IDENTIFICATION BY MASS SPECTROMETRY [LARGE SCALE ANALYSIS]</scope>
</reference>
<organism>
    <name type="scientific">Saccharomyces cerevisiae (strain ATCC 204508 / S288c)</name>
    <name type="common">Baker's yeast</name>
    <dbReference type="NCBI Taxonomy" id="559292"/>
    <lineage>
        <taxon>Eukaryota</taxon>
        <taxon>Fungi</taxon>
        <taxon>Dikarya</taxon>
        <taxon>Ascomycota</taxon>
        <taxon>Saccharomycotina</taxon>
        <taxon>Saccharomycetes</taxon>
        <taxon>Saccharomycetales</taxon>
        <taxon>Saccharomycetaceae</taxon>
        <taxon>Saccharomyces</taxon>
    </lineage>
</organism>
<gene>
    <name type="primary">SIZ1</name>
    <name type="synonym">ULL1</name>
    <name type="ordered locus">YDR409W</name>
</gene>
<keyword id="KW-0002">3D-structure</keyword>
<keyword id="KW-0963">Cytoplasm</keyword>
<keyword id="KW-0479">Metal-binding</keyword>
<keyword id="KW-0539">Nucleus</keyword>
<keyword id="KW-0597">Phosphoprotein</keyword>
<keyword id="KW-1185">Reference proteome</keyword>
<keyword id="KW-0808">Transferase</keyword>
<keyword id="KW-0832">Ubl conjugation</keyword>
<keyword id="KW-0833">Ubl conjugation pathway</keyword>
<keyword id="KW-0862">Zinc</keyword>
<keyword id="KW-0863">Zinc-finger</keyword>
<dbReference type="EC" id="2.3.2.-"/>
<dbReference type="EMBL" id="U32274">
    <property type="protein sequence ID" value="AAB64849.1"/>
    <property type="molecule type" value="Genomic_DNA"/>
</dbReference>
<dbReference type="EMBL" id="L07952">
    <property type="protein sequence ID" value="AAA16519.1"/>
    <property type="molecule type" value="Unassigned_DNA"/>
</dbReference>
<dbReference type="EMBL" id="BK006938">
    <property type="protein sequence ID" value="DAA12251.1"/>
    <property type="molecule type" value="Genomic_DNA"/>
</dbReference>
<dbReference type="PIR" id="S69691">
    <property type="entry name" value="S69691"/>
</dbReference>
<dbReference type="RefSeq" id="NP_010697.3">
    <property type="nucleotide sequence ID" value="NM_001180717.3"/>
</dbReference>
<dbReference type="PDB" id="2RNN">
    <property type="method" value="NMR"/>
    <property type="chains" value="A=1-111"/>
</dbReference>
<dbReference type="PDB" id="3I2D">
    <property type="method" value="X-ray"/>
    <property type="resolution" value="2.60 A"/>
    <property type="chains" value="A=112-465"/>
</dbReference>
<dbReference type="PDB" id="5JNE">
    <property type="method" value="X-ray"/>
    <property type="resolution" value="2.85 A"/>
    <property type="chains" value="A/E=167-449"/>
</dbReference>
<dbReference type="PDBsum" id="2RNN"/>
<dbReference type="PDBsum" id="3I2D"/>
<dbReference type="PDBsum" id="5JNE"/>
<dbReference type="BMRB" id="Q04195"/>
<dbReference type="SMR" id="Q04195"/>
<dbReference type="BioGRID" id="32469">
    <property type="interactions" value="239"/>
</dbReference>
<dbReference type="DIP" id="DIP-1011N"/>
<dbReference type="FunCoup" id="Q04195">
    <property type="interactions" value="184"/>
</dbReference>
<dbReference type="IntAct" id="Q04195">
    <property type="interactions" value="3"/>
</dbReference>
<dbReference type="MINT" id="Q04195"/>
<dbReference type="STRING" id="4932.YDR409W"/>
<dbReference type="GlyGen" id="Q04195">
    <property type="glycosylation" value="2 sites, 1 O-linked glycan (2 sites)"/>
</dbReference>
<dbReference type="iPTMnet" id="Q04195"/>
<dbReference type="PaxDb" id="4932-YDR409W"/>
<dbReference type="PeptideAtlas" id="Q04195"/>
<dbReference type="EnsemblFungi" id="YDR409W_mRNA">
    <property type="protein sequence ID" value="YDR409W"/>
    <property type="gene ID" value="YDR409W"/>
</dbReference>
<dbReference type="GeneID" id="852018"/>
<dbReference type="KEGG" id="sce:YDR409W"/>
<dbReference type="AGR" id="SGD:S000002817"/>
<dbReference type="SGD" id="S000002817">
    <property type="gene designation" value="SIZ1"/>
</dbReference>
<dbReference type="VEuPathDB" id="FungiDB:YDR409W"/>
<dbReference type="eggNOG" id="KOG2169">
    <property type="taxonomic scope" value="Eukaryota"/>
</dbReference>
<dbReference type="GeneTree" id="ENSGT01030000234539"/>
<dbReference type="HOGENOM" id="CLU_014307_0_0_1"/>
<dbReference type="InParanoid" id="Q04195"/>
<dbReference type="OMA" id="YIVEMIT"/>
<dbReference type="OrthoDB" id="28127at2759"/>
<dbReference type="BioCyc" id="YEAST:G3O-29952-MONOMER"/>
<dbReference type="Reactome" id="R-SCE-3232118">
    <property type="pathway name" value="SUMOylation of transcription factors"/>
</dbReference>
<dbReference type="Reactome" id="R-SCE-4085377">
    <property type="pathway name" value="SUMOylation of SUMOylation proteins"/>
</dbReference>
<dbReference type="Reactome" id="R-SCE-4551638">
    <property type="pathway name" value="SUMOylation of chromatin organization proteins"/>
</dbReference>
<dbReference type="Reactome" id="R-SCE-5693565">
    <property type="pathway name" value="Recruitment and ATM-mediated phosphorylation of repair and signaling proteins at DNA double strand breaks"/>
</dbReference>
<dbReference type="UniPathway" id="UPA00886"/>
<dbReference type="BioGRID-ORCS" id="852018">
    <property type="hits" value="0 hits in 10 CRISPR screens"/>
</dbReference>
<dbReference type="EvolutionaryTrace" id="Q04195"/>
<dbReference type="PRO" id="PR:Q04195"/>
<dbReference type="Proteomes" id="UP000002311">
    <property type="component" value="Chromosome IV"/>
</dbReference>
<dbReference type="RNAct" id="Q04195">
    <property type="molecule type" value="protein"/>
</dbReference>
<dbReference type="GO" id="GO:0005935">
    <property type="term" value="C:cellular bud neck"/>
    <property type="evidence" value="ECO:0007669"/>
    <property type="project" value="UniProtKB-SubCell"/>
</dbReference>
<dbReference type="GO" id="GO:0000785">
    <property type="term" value="C:chromatin"/>
    <property type="evidence" value="ECO:0000314"/>
    <property type="project" value="SGD"/>
</dbReference>
<dbReference type="GO" id="GO:0005634">
    <property type="term" value="C:nucleus"/>
    <property type="evidence" value="ECO:0007669"/>
    <property type="project" value="UniProtKB-SubCell"/>
</dbReference>
<dbReference type="GO" id="GO:0005940">
    <property type="term" value="C:septin ring"/>
    <property type="evidence" value="ECO:0000314"/>
    <property type="project" value="SGD"/>
</dbReference>
<dbReference type="GO" id="GO:0003690">
    <property type="term" value="F:double-stranded DNA binding"/>
    <property type="evidence" value="ECO:0000314"/>
    <property type="project" value="SGD"/>
</dbReference>
<dbReference type="GO" id="GO:0061665">
    <property type="term" value="F:SUMO ligase activity"/>
    <property type="evidence" value="ECO:0000318"/>
    <property type="project" value="GO_Central"/>
</dbReference>
<dbReference type="GO" id="GO:0019789">
    <property type="term" value="F:SUMO transferase activity"/>
    <property type="evidence" value="ECO:0000314"/>
    <property type="project" value="SGD"/>
</dbReference>
<dbReference type="GO" id="GO:0008270">
    <property type="term" value="F:zinc ion binding"/>
    <property type="evidence" value="ECO:0007669"/>
    <property type="project" value="UniProtKB-KW"/>
</dbReference>
<dbReference type="GO" id="GO:0007059">
    <property type="term" value="P:chromosome segregation"/>
    <property type="evidence" value="ECO:0000315"/>
    <property type="project" value="SGD"/>
</dbReference>
<dbReference type="GO" id="GO:1990683">
    <property type="term" value="P:DNA double-strand break attachment to nuclear envelope"/>
    <property type="evidence" value="ECO:0000316"/>
    <property type="project" value="SGD"/>
</dbReference>
<dbReference type="GO" id="GO:0031397">
    <property type="term" value="P:negative regulation of protein ubiquitination"/>
    <property type="evidence" value="ECO:0000314"/>
    <property type="project" value="SGD"/>
</dbReference>
<dbReference type="GO" id="GO:0016925">
    <property type="term" value="P:protein sumoylation"/>
    <property type="evidence" value="ECO:0000314"/>
    <property type="project" value="SGD"/>
</dbReference>
<dbReference type="CDD" id="cd16793">
    <property type="entry name" value="SP-RING_ScSiz-like"/>
    <property type="match status" value="1"/>
</dbReference>
<dbReference type="FunFam" id="3.30.40.10:FF:000247">
    <property type="entry name" value="Uncharacterized protein, isoform B"/>
    <property type="match status" value="1"/>
</dbReference>
<dbReference type="Gene3D" id="2.60.120.780">
    <property type="entry name" value="PINIT domain"/>
    <property type="match status" value="1"/>
</dbReference>
<dbReference type="Gene3D" id="1.10.720.30">
    <property type="entry name" value="SAP domain"/>
    <property type="match status" value="1"/>
</dbReference>
<dbReference type="Gene3D" id="3.30.40.10">
    <property type="entry name" value="Zinc/RING finger domain, C3HC4 (zinc finger)"/>
    <property type="match status" value="1"/>
</dbReference>
<dbReference type="InterPro" id="IPR023321">
    <property type="entry name" value="PINIT"/>
</dbReference>
<dbReference type="InterPro" id="IPR038654">
    <property type="entry name" value="PINIT_sf"/>
</dbReference>
<dbReference type="InterPro" id="IPR003034">
    <property type="entry name" value="SAP_dom"/>
</dbReference>
<dbReference type="InterPro" id="IPR036361">
    <property type="entry name" value="SAP_dom_sf"/>
</dbReference>
<dbReference type="InterPro" id="IPR031141">
    <property type="entry name" value="SIZ1/2_SP-RING"/>
</dbReference>
<dbReference type="InterPro" id="IPR004181">
    <property type="entry name" value="Znf_MIZ"/>
</dbReference>
<dbReference type="InterPro" id="IPR013083">
    <property type="entry name" value="Znf_RING/FYVE/PHD"/>
</dbReference>
<dbReference type="PANTHER" id="PTHR10782:SF4">
    <property type="entry name" value="TONALLI, ISOFORM E"/>
    <property type="match status" value="1"/>
</dbReference>
<dbReference type="PANTHER" id="PTHR10782">
    <property type="entry name" value="ZINC FINGER MIZ DOMAIN-CONTAINING PROTEIN"/>
    <property type="match status" value="1"/>
</dbReference>
<dbReference type="Pfam" id="PF14324">
    <property type="entry name" value="PINIT"/>
    <property type="match status" value="1"/>
</dbReference>
<dbReference type="Pfam" id="PF02037">
    <property type="entry name" value="SAP"/>
    <property type="match status" value="1"/>
</dbReference>
<dbReference type="Pfam" id="PF02891">
    <property type="entry name" value="zf-MIZ"/>
    <property type="match status" value="1"/>
</dbReference>
<dbReference type="SMART" id="SM00513">
    <property type="entry name" value="SAP"/>
    <property type="match status" value="1"/>
</dbReference>
<dbReference type="SUPFAM" id="SSF57850">
    <property type="entry name" value="RING/U-box"/>
    <property type="match status" value="1"/>
</dbReference>
<dbReference type="SUPFAM" id="SSF68906">
    <property type="entry name" value="SAP domain"/>
    <property type="match status" value="1"/>
</dbReference>
<dbReference type="PROSITE" id="PS51466">
    <property type="entry name" value="PINIT"/>
    <property type="match status" value="1"/>
</dbReference>
<dbReference type="PROSITE" id="PS50800">
    <property type="entry name" value="SAP"/>
    <property type="match status" value="1"/>
</dbReference>
<dbReference type="PROSITE" id="PS51044">
    <property type="entry name" value="ZF_SP_RING"/>
    <property type="match status" value="1"/>
</dbReference>
<proteinExistence type="evidence at protein level"/>
<name>SIZ1_YEAST</name>